<reference key="1">
    <citation type="submission" date="2006-01" db="EMBL/GenBank/DDBJ databases">
        <title>Complete sequence of Rhodopseudomonas palustris HaA2.</title>
        <authorList>
            <consortium name="US DOE Joint Genome Institute"/>
            <person name="Copeland A."/>
            <person name="Lucas S."/>
            <person name="Lapidus A."/>
            <person name="Barry K."/>
            <person name="Detter J.C."/>
            <person name="Glavina T."/>
            <person name="Hammon N."/>
            <person name="Israni S."/>
            <person name="Pitluck S."/>
            <person name="Chain P."/>
            <person name="Malfatti S."/>
            <person name="Shin M."/>
            <person name="Vergez L."/>
            <person name="Schmutz J."/>
            <person name="Larimer F."/>
            <person name="Land M."/>
            <person name="Hauser L."/>
            <person name="Pelletier D.A."/>
            <person name="Kyrpides N."/>
            <person name="Anderson I."/>
            <person name="Oda Y."/>
            <person name="Harwood C.S."/>
            <person name="Richardson P."/>
        </authorList>
    </citation>
    <scope>NUCLEOTIDE SEQUENCE [LARGE SCALE GENOMIC DNA]</scope>
    <source>
        <strain>HaA2</strain>
    </source>
</reference>
<organism>
    <name type="scientific">Rhodopseudomonas palustris (strain HaA2)</name>
    <dbReference type="NCBI Taxonomy" id="316058"/>
    <lineage>
        <taxon>Bacteria</taxon>
        <taxon>Pseudomonadati</taxon>
        <taxon>Pseudomonadota</taxon>
        <taxon>Alphaproteobacteria</taxon>
        <taxon>Hyphomicrobiales</taxon>
        <taxon>Nitrobacteraceae</taxon>
        <taxon>Rhodopseudomonas</taxon>
    </lineage>
</organism>
<comment type="function">
    <text evidence="1">Catalyzes the conversion of 4-hydroxy-tetrahydrodipicolinate (HTPA) to tetrahydrodipicolinate.</text>
</comment>
<comment type="catalytic activity">
    <reaction evidence="1">
        <text>(S)-2,3,4,5-tetrahydrodipicolinate + NAD(+) + H2O = (2S,4S)-4-hydroxy-2,3,4,5-tetrahydrodipicolinate + NADH + H(+)</text>
        <dbReference type="Rhea" id="RHEA:35323"/>
        <dbReference type="ChEBI" id="CHEBI:15377"/>
        <dbReference type="ChEBI" id="CHEBI:15378"/>
        <dbReference type="ChEBI" id="CHEBI:16845"/>
        <dbReference type="ChEBI" id="CHEBI:57540"/>
        <dbReference type="ChEBI" id="CHEBI:57945"/>
        <dbReference type="ChEBI" id="CHEBI:67139"/>
        <dbReference type="EC" id="1.17.1.8"/>
    </reaction>
</comment>
<comment type="catalytic activity">
    <reaction evidence="1">
        <text>(S)-2,3,4,5-tetrahydrodipicolinate + NADP(+) + H2O = (2S,4S)-4-hydroxy-2,3,4,5-tetrahydrodipicolinate + NADPH + H(+)</text>
        <dbReference type="Rhea" id="RHEA:35331"/>
        <dbReference type="ChEBI" id="CHEBI:15377"/>
        <dbReference type="ChEBI" id="CHEBI:15378"/>
        <dbReference type="ChEBI" id="CHEBI:16845"/>
        <dbReference type="ChEBI" id="CHEBI:57783"/>
        <dbReference type="ChEBI" id="CHEBI:58349"/>
        <dbReference type="ChEBI" id="CHEBI:67139"/>
        <dbReference type="EC" id="1.17.1.8"/>
    </reaction>
</comment>
<comment type="pathway">
    <text evidence="1">Amino-acid biosynthesis; L-lysine biosynthesis via DAP pathway; (S)-tetrahydrodipicolinate from L-aspartate: step 4/4.</text>
</comment>
<comment type="subcellular location">
    <subcellularLocation>
        <location evidence="1">Cytoplasm</location>
    </subcellularLocation>
</comment>
<comment type="similarity">
    <text evidence="1">Belongs to the DapB family.</text>
</comment>
<comment type="caution">
    <text evidence="2">Was originally thought to be a dihydrodipicolinate reductase (DHDPR), catalyzing the conversion of dihydrodipicolinate to tetrahydrodipicolinate. However, it was shown in E.coli that the substrate of the enzymatic reaction is not dihydrodipicolinate (DHDP) but in fact (2S,4S)-4-hydroxy-2,3,4,5-tetrahydrodipicolinic acid (HTPA), the product released by the DapA-catalyzed reaction.</text>
</comment>
<accession>Q2J314</accession>
<evidence type="ECO:0000255" key="1">
    <source>
        <dbReference type="HAMAP-Rule" id="MF_00102"/>
    </source>
</evidence>
<evidence type="ECO:0000305" key="2"/>
<feature type="chain" id="PRO_1000008618" description="4-hydroxy-tetrahydrodipicolinate reductase">
    <location>
        <begin position="1"/>
        <end position="271"/>
    </location>
</feature>
<feature type="active site" description="Proton donor/acceptor" evidence="1">
    <location>
        <position position="157"/>
    </location>
</feature>
<feature type="active site" description="Proton donor" evidence="1">
    <location>
        <position position="161"/>
    </location>
</feature>
<feature type="binding site" evidence="1">
    <location>
        <begin position="10"/>
        <end position="15"/>
    </location>
    <ligand>
        <name>NAD(+)</name>
        <dbReference type="ChEBI" id="CHEBI:57540"/>
    </ligand>
</feature>
<feature type="binding site" evidence="1">
    <location>
        <position position="36"/>
    </location>
    <ligand>
        <name>NAD(+)</name>
        <dbReference type="ChEBI" id="CHEBI:57540"/>
    </ligand>
</feature>
<feature type="binding site" evidence="1">
    <location>
        <begin position="100"/>
        <end position="102"/>
    </location>
    <ligand>
        <name>NAD(+)</name>
        <dbReference type="ChEBI" id="CHEBI:57540"/>
    </ligand>
</feature>
<feature type="binding site" evidence="1">
    <location>
        <begin position="124"/>
        <end position="127"/>
    </location>
    <ligand>
        <name>NAD(+)</name>
        <dbReference type="ChEBI" id="CHEBI:57540"/>
    </ligand>
</feature>
<feature type="binding site" evidence="1">
    <location>
        <position position="158"/>
    </location>
    <ligand>
        <name>(S)-2,3,4,5-tetrahydrodipicolinate</name>
        <dbReference type="ChEBI" id="CHEBI:16845"/>
    </ligand>
</feature>
<feature type="binding site" evidence="1">
    <location>
        <begin position="167"/>
        <end position="168"/>
    </location>
    <ligand>
        <name>(S)-2,3,4,5-tetrahydrodipicolinate</name>
        <dbReference type="ChEBI" id="CHEBI:16845"/>
    </ligand>
</feature>
<dbReference type="EC" id="1.17.1.8" evidence="1"/>
<dbReference type="EMBL" id="CP000250">
    <property type="protein sequence ID" value="ABD05146.1"/>
    <property type="molecule type" value="Genomic_DNA"/>
</dbReference>
<dbReference type="RefSeq" id="WP_011439336.1">
    <property type="nucleotide sequence ID" value="NC_007778.1"/>
</dbReference>
<dbReference type="SMR" id="Q2J314"/>
<dbReference type="STRING" id="316058.RPB_0435"/>
<dbReference type="KEGG" id="rpb:RPB_0435"/>
<dbReference type="eggNOG" id="COG0289">
    <property type="taxonomic scope" value="Bacteria"/>
</dbReference>
<dbReference type="HOGENOM" id="CLU_047479_2_1_5"/>
<dbReference type="OrthoDB" id="9790352at2"/>
<dbReference type="UniPathway" id="UPA00034">
    <property type="reaction ID" value="UER00018"/>
</dbReference>
<dbReference type="Proteomes" id="UP000008809">
    <property type="component" value="Chromosome"/>
</dbReference>
<dbReference type="GO" id="GO:0005829">
    <property type="term" value="C:cytosol"/>
    <property type="evidence" value="ECO:0007669"/>
    <property type="project" value="TreeGrafter"/>
</dbReference>
<dbReference type="GO" id="GO:0008839">
    <property type="term" value="F:4-hydroxy-tetrahydrodipicolinate reductase"/>
    <property type="evidence" value="ECO:0007669"/>
    <property type="project" value="UniProtKB-EC"/>
</dbReference>
<dbReference type="GO" id="GO:0051287">
    <property type="term" value="F:NAD binding"/>
    <property type="evidence" value="ECO:0007669"/>
    <property type="project" value="UniProtKB-UniRule"/>
</dbReference>
<dbReference type="GO" id="GO:0050661">
    <property type="term" value="F:NADP binding"/>
    <property type="evidence" value="ECO:0007669"/>
    <property type="project" value="UniProtKB-UniRule"/>
</dbReference>
<dbReference type="GO" id="GO:0016726">
    <property type="term" value="F:oxidoreductase activity, acting on CH or CH2 groups, NAD or NADP as acceptor"/>
    <property type="evidence" value="ECO:0007669"/>
    <property type="project" value="UniProtKB-UniRule"/>
</dbReference>
<dbReference type="GO" id="GO:0019877">
    <property type="term" value="P:diaminopimelate biosynthetic process"/>
    <property type="evidence" value="ECO:0007669"/>
    <property type="project" value="UniProtKB-UniRule"/>
</dbReference>
<dbReference type="GO" id="GO:0009089">
    <property type="term" value="P:lysine biosynthetic process via diaminopimelate"/>
    <property type="evidence" value="ECO:0007669"/>
    <property type="project" value="UniProtKB-UniRule"/>
</dbReference>
<dbReference type="CDD" id="cd02274">
    <property type="entry name" value="DHDPR_N"/>
    <property type="match status" value="1"/>
</dbReference>
<dbReference type="FunFam" id="3.30.360.10:FF:000004">
    <property type="entry name" value="4-hydroxy-tetrahydrodipicolinate reductase"/>
    <property type="match status" value="1"/>
</dbReference>
<dbReference type="Gene3D" id="3.30.360.10">
    <property type="entry name" value="Dihydrodipicolinate Reductase, domain 2"/>
    <property type="match status" value="1"/>
</dbReference>
<dbReference type="Gene3D" id="3.40.50.720">
    <property type="entry name" value="NAD(P)-binding Rossmann-like Domain"/>
    <property type="match status" value="1"/>
</dbReference>
<dbReference type="HAMAP" id="MF_00102">
    <property type="entry name" value="DapB"/>
    <property type="match status" value="1"/>
</dbReference>
<dbReference type="InterPro" id="IPR022663">
    <property type="entry name" value="DapB_C"/>
</dbReference>
<dbReference type="InterPro" id="IPR000846">
    <property type="entry name" value="DapB_N"/>
</dbReference>
<dbReference type="InterPro" id="IPR022664">
    <property type="entry name" value="DapB_N_CS"/>
</dbReference>
<dbReference type="InterPro" id="IPR023940">
    <property type="entry name" value="DHDPR_bac"/>
</dbReference>
<dbReference type="InterPro" id="IPR036291">
    <property type="entry name" value="NAD(P)-bd_dom_sf"/>
</dbReference>
<dbReference type="NCBIfam" id="TIGR00036">
    <property type="entry name" value="dapB"/>
    <property type="match status" value="1"/>
</dbReference>
<dbReference type="PANTHER" id="PTHR20836:SF0">
    <property type="entry name" value="4-HYDROXY-TETRAHYDRODIPICOLINATE REDUCTASE 1, CHLOROPLASTIC-RELATED"/>
    <property type="match status" value="1"/>
</dbReference>
<dbReference type="PANTHER" id="PTHR20836">
    <property type="entry name" value="DIHYDRODIPICOLINATE REDUCTASE"/>
    <property type="match status" value="1"/>
</dbReference>
<dbReference type="Pfam" id="PF05173">
    <property type="entry name" value="DapB_C"/>
    <property type="match status" value="1"/>
</dbReference>
<dbReference type="Pfam" id="PF01113">
    <property type="entry name" value="DapB_N"/>
    <property type="match status" value="1"/>
</dbReference>
<dbReference type="PIRSF" id="PIRSF000161">
    <property type="entry name" value="DHPR"/>
    <property type="match status" value="1"/>
</dbReference>
<dbReference type="SUPFAM" id="SSF55347">
    <property type="entry name" value="Glyceraldehyde-3-phosphate dehydrogenase-like, C-terminal domain"/>
    <property type="match status" value="1"/>
</dbReference>
<dbReference type="SUPFAM" id="SSF51735">
    <property type="entry name" value="NAD(P)-binding Rossmann-fold domains"/>
    <property type="match status" value="1"/>
</dbReference>
<dbReference type="PROSITE" id="PS01298">
    <property type="entry name" value="DAPB"/>
    <property type="match status" value="1"/>
</dbReference>
<proteinExistence type="inferred from homology"/>
<sequence length="271" mass="27824">MSDMRLIVAGAGGRMGRALTRAISETKGVVLTGALEAPGSELLGQDAGVLAGLPANGVELSADLWTLSANADGILDFTVPGATIANVAIAAQRGIVHVIGTTGLSSSDNAVIQSVTRQAIVVKSGNMSLGVNLLAALTKRVAQSLGDNFDIEIVEMHHRAKIDAPSGTALLLGEAAALGRGVDLDSHSARGRDGLTGARKTGDIGFASLRGGTVTGDHSVIFAGPYERIELAHKAEDRMIFAHGALKAAQWAHGKKPGLYSMMDVLGLAEF</sequence>
<protein>
    <recommendedName>
        <fullName evidence="1">4-hydroxy-tetrahydrodipicolinate reductase</fullName>
        <shortName evidence="1">HTPA reductase</shortName>
        <ecNumber evidence="1">1.17.1.8</ecNumber>
    </recommendedName>
</protein>
<keyword id="KW-0028">Amino-acid biosynthesis</keyword>
<keyword id="KW-0963">Cytoplasm</keyword>
<keyword id="KW-0220">Diaminopimelate biosynthesis</keyword>
<keyword id="KW-0457">Lysine biosynthesis</keyword>
<keyword id="KW-0520">NAD</keyword>
<keyword id="KW-0521">NADP</keyword>
<keyword id="KW-0560">Oxidoreductase</keyword>
<keyword id="KW-1185">Reference proteome</keyword>
<gene>
    <name evidence="1" type="primary">dapB</name>
    <name type="ordered locus">RPB_0435</name>
</gene>
<name>DAPB_RHOP2</name>